<evidence type="ECO:0000255" key="1">
    <source>
        <dbReference type="HAMAP-Rule" id="MF_00658"/>
    </source>
</evidence>
<comment type="function">
    <text evidence="1">Specifically methylates the pseudouridine at position 1915 (m3Psi1915) in 23S rRNA.</text>
</comment>
<comment type="catalytic activity">
    <reaction evidence="1">
        <text>pseudouridine(1915) in 23S rRNA + S-adenosyl-L-methionine = N(3)-methylpseudouridine(1915) in 23S rRNA + S-adenosyl-L-homocysteine + H(+)</text>
        <dbReference type="Rhea" id="RHEA:42752"/>
        <dbReference type="Rhea" id="RHEA-COMP:10221"/>
        <dbReference type="Rhea" id="RHEA-COMP:10222"/>
        <dbReference type="ChEBI" id="CHEBI:15378"/>
        <dbReference type="ChEBI" id="CHEBI:57856"/>
        <dbReference type="ChEBI" id="CHEBI:59789"/>
        <dbReference type="ChEBI" id="CHEBI:65314"/>
        <dbReference type="ChEBI" id="CHEBI:74486"/>
        <dbReference type="EC" id="2.1.1.177"/>
    </reaction>
</comment>
<comment type="subunit">
    <text evidence="1">Homodimer.</text>
</comment>
<comment type="subcellular location">
    <subcellularLocation>
        <location evidence="1">Cytoplasm</location>
    </subcellularLocation>
</comment>
<comment type="similarity">
    <text evidence="1">Belongs to the RNA methyltransferase RlmH family.</text>
</comment>
<dbReference type="EC" id="2.1.1.177" evidence="1"/>
<dbReference type="EMBL" id="BX572593">
    <property type="protein sequence ID" value="CAE25611.1"/>
    <property type="molecule type" value="Genomic_DNA"/>
</dbReference>
<dbReference type="RefSeq" id="WP_011155735.1">
    <property type="nucleotide sequence ID" value="NZ_CP116810.1"/>
</dbReference>
<dbReference type="SMR" id="Q6NDE1"/>
<dbReference type="STRING" id="258594.RPA0167"/>
<dbReference type="GeneID" id="66891172"/>
<dbReference type="eggNOG" id="COG1576">
    <property type="taxonomic scope" value="Bacteria"/>
</dbReference>
<dbReference type="HOGENOM" id="CLU_100552_1_1_5"/>
<dbReference type="PhylomeDB" id="Q6NDE1"/>
<dbReference type="GO" id="GO:0005737">
    <property type="term" value="C:cytoplasm"/>
    <property type="evidence" value="ECO:0007669"/>
    <property type="project" value="UniProtKB-SubCell"/>
</dbReference>
<dbReference type="GO" id="GO:0070038">
    <property type="term" value="F:rRNA (pseudouridine-N3-)-methyltransferase activity"/>
    <property type="evidence" value="ECO:0007669"/>
    <property type="project" value="UniProtKB-UniRule"/>
</dbReference>
<dbReference type="CDD" id="cd18081">
    <property type="entry name" value="RlmH-like"/>
    <property type="match status" value="1"/>
</dbReference>
<dbReference type="Gene3D" id="3.40.1280.10">
    <property type="match status" value="1"/>
</dbReference>
<dbReference type="HAMAP" id="MF_00658">
    <property type="entry name" value="23SrRNA_methyltr_H"/>
    <property type="match status" value="1"/>
</dbReference>
<dbReference type="InterPro" id="IPR029028">
    <property type="entry name" value="Alpha/beta_knot_MTases"/>
</dbReference>
<dbReference type="InterPro" id="IPR003742">
    <property type="entry name" value="RlmH-like"/>
</dbReference>
<dbReference type="InterPro" id="IPR029026">
    <property type="entry name" value="tRNA_m1G_MTases_N"/>
</dbReference>
<dbReference type="NCBIfam" id="NF000989">
    <property type="entry name" value="PRK00103.2-3"/>
    <property type="match status" value="1"/>
</dbReference>
<dbReference type="NCBIfam" id="NF000991">
    <property type="entry name" value="PRK00103.2-5"/>
    <property type="match status" value="1"/>
</dbReference>
<dbReference type="PANTHER" id="PTHR33603">
    <property type="entry name" value="METHYLTRANSFERASE"/>
    <property type="match status" value="1"/>
</dbReference>
<dbReference type="PANTHER" id="PTHR33603:SF1">
    <property type="entry name" value="RIBOSOMAL RNA LARGE SUBUNIT METHYLTRANSFERASE H"/>
    <property type="match status" value="1"/>
</dbReference>
<dbReference type="Pfam" id="PF02590">
    <property type="entry name" value="SPOUT_MTase"/>
    <property type="match status" value="1"/>
</dbReference>
<dbReference type="PIRSF" id="PIRSF004505">
    <property type="entry name" value="MT_bac"/>
    <property type="match status" value="1"/>
</dbReference>
<dbReference type="SUPFAM" id="SSF75217">
    <property type="entry name" value="alpha/beta knot"/>
    <property type="match status" value="1"/>
</dbReference>
<organism>
    <name type="scientific">Rhodopseudomonas palustris (strain ATCC BAA-98 / CGA009)</name>
    <dbReference type="NCBI Taxonomy" id="258594"/>
    <lineage>
        <taxon>Bacteria</taxon>
        <taxon>Pseudomonadati</taxon>
        <taxon>Pseudomonadota</taxon>
        <taxon>Alphaproteobacteria</taxon>
        <taxon>Hyphomicrobiales</taxon>
        <taxon>Nitrobacteraceae</taxon>
        <taxon>Rhodopseudomonas</taxon>
    </lineage>
</organism>
<proteinExistence type="inferred from homology"/>
<name>RLMH_RHOPA</name>
<reference key="1">
    <citation type="journal article" date="2004" name="Nat. Biotechnol.">
        <title>Complete genome sequence of the metabolically versatile photosynthetic bacterium Rhodopseudomonas palustris.</title>
        <authorList>
            <person name="Larimer F.W."/>
            <person name="Chain P."/>
            <person name="Hauser L."/>
            <person name="Lamerdin J.E."/>
            <person name="Malfatti S."/>
            <person name="Do L."/>
            <person name="Land M.L."/>
            <person name="Pelletier D.A."/>
            <person name="Beatty J.T."/>
            <person name="Lang A.S."/>
            <person name="Tabita F.R."/>
            <person name="Gibson J.L."/>
            <person name="Hanson T.E."/>
            <person name="Bobst C."/>
            <person name="Torres y Torres J.L."/>
            <person name="Peres C."/>
            <person name="Harrison F.H."/>
            <person name="Gibson J."/>
            <person name="Harwood C.S."/>
        </authorList>
    </citation>
    <scope>NUCLEOTIDE SEQUENCE [LARGE SCALE GENOMIC DNA]</scope>
    <source>
        <strain>ATCC BAA-98 / CGA009</strain>
    </source>
</reference>
<sequence length="160" mass="17640">MRLLILAVGKLKQGPERELAERYRARFDDLGRKLGFRGLDVHEIAESRAREAPARMAEEAAAIIAQVPDGAVLVTLDERGQSLGSTAFAAQLGRWRDEQVPGTIFVIGGADGLLPELRRKAKLSMSFGGATWPHQMVRVMLLEQIYRAATILAGHPYHRA</sequence>
<accession>Q6NDE1</accession>
<protein>
    <recommendedName>
        <fullName evidence="1">Ribosomal RNA large subunit methyltransferase H</fullName>
        <ecNumber evidence="1">2.1.1.177</ecNumber>
    </recommendedName>
    <alternativeName>
        <fullName evidence="1">23S rRNA (pseudouridine1915-N3)-methyltransferase</fullName>
    </alternativeName>
    <alternativeName>
        <fullName evidence="1">23S rRNA m3Psi1915 methyltransferase</fullName>
    </alternativeName>
    <alternativeName>
        <fullName evidence="1">rRNA (pseudouridine-N3-)-methyltransferase RlmH</fullName>
    </alternativeName>
</protein>
<gene>
    <name evidence="1" type="primary">rlmH</name>
    <name type="ordered locus">RPA0167</name>
</gene>
<feature type="chain" id="PRO_0000198169" description="Ribosomal RNA large subunit methyltransferase H">
    <location>
        <begin position="1"/>
        <end position="160"/>
    </location>
</feature>
<feature type="binding site" evidence="1">
    <location>
        <position position="76"/>
    </location>
    <ligand>
        <name>S-adenosyl-L-methionine</name>
        <dbReference type="ChEBI" id="CHEBI:59789"/>
    </ligand>
</feature>
<feature type="binding site" evidence="1">
    <location>
        <position position="108"/>
    </location>
    <ligand>
        <name>S-adenosyl-L-methionine</name>
        <dbReference type="ChEBI" id="CHEBI:59789"/>
    </ligand>
</feature>
<keyword id="KW-0963">Cytoplasm</keyword>
<keyword id="KW-0489">Methyltransferase</keyword>
<keyword id="KW-0698">rRNA processing</keyword>
<keyword id="KW-0949">S-adenosyl-L-methionine</keyword>
<keyword id="KW-0808">Transferase</keyword>